<protein>
    <recommendedName>
        <fullName evidence="1">NAD(P)H-quinone oxidoreductase subunit I, chloroplastic</fullName>
        <ecNumber evidence="1">7.1.1.-</ecNumber>
    </recommendedName>
    <alternativeName>
        <fullName evidence="1">NAD(P)H dehydrogenase subunit I</fullName>
        <shortName evidence="1">NDH subunit I</shortName>
    </alternativeName>
    <alternativeName>
        <fullName evidence="1">NADH-plastoquinone oxidoreductase subunit I</fullName>
    </alternativeName>
</protein>
<sequence length="166" mass="19509">MFPMVTEFMNYGQQTVRAARYIGQGFMITLSHANRLPVTIQYPYEKLITSERFRGRIHFEFDKCIACEVCVRVCPIDLPVVDWKLETDIRKKRLLNYSIDFGICIFCGNCVEYCPTNCLSMTEEYELSTYDRHELNYNQIALGRLPMSIIDDYTIRTIFNLPEIKT</sequence>
<dbReference type="EC" id="7.1.1.-" evidence="1"/>
<dbReference type="EMBL" id="AF383784">
    <property type="protein sequence ID" value="AAN61725.1"/>
    <property type="molecule type" value="Genomic_DNA"/>
</dbReference>
<dbReference type="SMR" id="Q8HVS9"/>
<dbReference type="GO" id="GO:0009535">
    <property type="term" value="C:chloroplast thylakoid membrane"/>
    <property type="evidence" value="ECO:0007669"/>
    <property type="project" value="UniProtKB-SubCell"/>
</dbReference>
<dbReference type="GO" id="GO:0051539">
    <property type="term" value="F:4 iron, 4 sulfur cluster binding"/>
    <property type="evidence" value="ECO:0007669"/>
    <property type="project" value="UniProtKB-KW"/>
</dbReference>
<dbReference type="GO" id="GO:0005506">
    <property type="term" value="F:iron ion binding"/>
    <property type="evidence" value="ECO:0007669"/>
    <property type="project" value="UniProtKB-UniRule"/>
</dbReference>
<dbReference type="GO" id="GO:0008137">
    <property type="term" value="F:NADH dehydrogenase (ubiquinone) activity"/>
    <property type="evidence" value="ECO:0007669"/>
    <property type="project" value="InterPro"/>
</dbReference>
<dbReference type="GO" id="GO:0048038">
    <property type="term" value="F:quinone binding"/>
    <property type="evidence" value="ECO:0007669"/>
    <property type="project" value="UniProtKB-KW"/>
</dbReference>
<dbReference type="GO" id="GO:0019684">
    <property type="term" value="P:photosynthesis, light reaction"/>
    <property type="evidence" value="ECO:0007669"/>
    <property type="project" value="UniProtKB-UniRule"/>
</dbReference>
<dbReference type="FunFam" id="3.30.70.3270:FF:000006">
    <property type="entry name" value="NAD(P)H-quinone oxidoreductase subunit I, chloroplastic"/>
    <property type="match status" value="1"/>
</dbReference>
<dbReference type="Gene3D" id="3.30.70.3270">
    <property type="match status" value="1"/>
</dbReference>
<dbReference type="HAMAP" id="MF_01351">
    <property type="entry name" value="NDH1_NuoI"/>
    <property type="match status" value="1"/>
</dbReference>
<dbReference type="InterPro" id="IPR017896">
    <property type="entry name" value="4Fe4S_Fe-S-bd"/>
</dbReference>
<dbReference type="InterPro" id="IPR017900">
    <property type="entry name" value="4Fe4S_Fe_S_CS"/>
</dbReference>
<dbReference type="InterPro" id="IPR010226">
    <property type="entry name" value="NADH_quinone_OxRdtase_chainI"/>
</dbReference>
<dbReference type="InterPro" id="IPR004497">
    <property type="entry name" value="NDHI"/>
</dbReference>
<dbReference type="NCBIfam" id="TIGR00403">
    <property type="entry name" value="ndhI"/>
    <property type="match status" value="1"/>
</dbReference>
<dbReference type="NCBIfam" id="TIGR01971">
    <property type="entry name" value="NuoI"/>
    <property type="match status" value="1"/>
</dbReference>
<dbReference type="NCBIfam" id="NF004537">
    <property type="entry name" value="PRK05888.1-3"/>
    <property type="match status" value="1"/>
</dbReference>
<dbReference type="PANTHER" id="PTHR47275">
    <property type="entry name" value="NAD(P)H-QUINONE OXIDOREDUCTASE SUBUNIT I, CHLOROPLASTIC"/>
    <property type="match status" value="1"/>
</dbReference>
<dbReference type="PANTHER" id="PTHR47275:SF1">
    <property type="entry name" value="NAD(P)H-QUINONE OXIDOREDUCTASE SUBUNIT I, CHLOROPLASTIC"/>
    <property type="match status" value="1"/>
</dbReference>
<dbReference type="Pfam" id="PF00037">
    <property type="entry name" value="Fer4"/>
    <property type="match status" value="2"/>
</dbReference>
<dbReference type="SUPFAM" id="SSF54862">
    <property type="entry name" value="4Fe-4S ferredoxins"/>
    <property type="match status" value="1"/>
</dbReference>
<dbReference type="PROSITE" id="PS00198">
    <property type="entry name" value="4FE4S_FER_1"/>
    <property type="match status" value="2"/>
</dbReference>
<dbReference type="PROSITE" id="PS51379">
    <property type="entry name" value="4FE4S_FER_2"/>
    <property type="match status" value="2"/>
</dbReference>
<reference key="1">
    <citation type="submission" date="2003-01" db="EMBL/GenBank/DDBJ databases">
        <title>Chloroplast DNA phylogeny of tribe Heliantheae (Asteraceae).</title>
        <authorList>
            <person name="Panero J.L."/>
            <person name="Baldwin B.G."/>
            <person name="Schilling E.E."/>
            <person name="Clevinger J.A."/>
        </authorList>
    </citation>
    <scope>NUCLEOTIDE SEQUENCE [GENOMIC DNA]</scope>
</reference>
<organism>
    <name type="scientific">Eriophyllum staechadifolium</name>
    <name type="common">Seaside woolly sunflower</name>
    <dbReference type="NCBI Taxonomy" id="149426"/>
    <lineage>
        <taxon>Eukaryota</taxon>
        <taxon>Viridiplantae</taxon>
        <taxon>Streptophyta</taxon>
        <taxon>Embryophyta</taxon>
        <taxon>Tracheophyta</taxon>
        <taxon>Spermatophyta</taxon>
        <taxon>Magnoliopsida</taxon>
        <taxon>eudicotyledons</taxon>
        <taxon>Gunneridae</taxon>
        <taxon>Pentapetalae</taxon>
        <taxon>asterids</taxon>
        <taxon>campanulids</taxon>
        <taxon>Asterales</taxon>
        <taxon>Asteraceae</taxon>
        <taxon>Asteroideae</taxon>
        <taxon>Heliantheae alliance</taxon>
        <taxon>Madieae</taxon>
        <taxon>Baeriinae</taxon>
        <taxon>Eriophyllum</taxon>
    </lineage>
</organism>
<accession>Q8HVS9</accession>
<evidence type="ECO:0000255" key="1">
    <source>
        <dbReference type="HAMAP-Rule" id="MF_01351"/>
    </source>
</evidence>
<keyword id="KW-0004">4Fe-4S</keyword>
<keyword id="KW-0150">Chloroplast</keyword>
<keyword id="KW-0408">Iron</keyword>
<keyword id="KW-0411">Iron-sulfur</keyword>
<keyword id="KW-0472">Membrane</keyword>
<keyword id="KW-0479">Metal-binding</keyword>
<keyword id="KW-0520">NAD</keyword>
<keyword id="KW-0521">NADP</keyword>
<keyword id="KW-0934">Plastid</keyword>
<keyword id="KW-0618">Plastoquinone</keyword>
<keyword id="KW-0874">Quinone</keyword>
<keyword id="KW-0677">Repeat</keyword>
<keyword id="KW-0793">Thylakoid</keyword>
<keyword id="KW-1278">Translocase</keyword>
<gene>
    <name evidence="1" type="primary">ndhI</name>
</gene>
<proteinExistence type="inferred from homology"/>
<feature type="chain" id="PRO_0000250787" description="NAD(P)H-quinone oxidoreductase subunit I, chloroplastic">
    <location>
        <begin position="1"/>
        <end position="166"/>
    </location>
</feature>
<feature type="domain" description="4Fe-4S ferredoxin-type 1" evidence="1">
    <location>
        <begin position="55"/>
        <end position="84"/>
    </location>
</feature>
<feature type="domain" description="4Fe-4S ferredoxin-type 2" evidence="1">
    <location>
        <begin position="95"/>
        <end position="124"/>
    </location>
</feature>
<feature type="binding site" evidence="1">
    <location>
        <position position="64"/>
    </location>
    <ligand>
        <name>[4Fe-4S] cluster</name>
        <dbReference type="ChEBI" id="CHEBI:49883"/>
        <label>1</label>
    </ligand>
</feature>
<feature type="binding site" evidence="1">
    <location>
        <position position="67"/>
    </location>
    <ligand>
        <name>[4Fe-4S] cluster</name>
        <dbReference type="ChEBI" id="CHEBI:49883"/>
        <label>1</label>
    </ligand>
</feature>
<feature type="binding site" evidence="1">
    <location>
        <position position="70"/>
    </location>
    <ligand>
        <name>[4Fe-4S] cluster</name>
        <dbReference type="ChEBI" id="CHEBI:49883"/>
        <label>1</label>
    </ligand>
</feature>
<feature type="binding site" evidence="1">
    <location>
        <position position="74"/>
    </location>
    <ligand>
        <name>[4Fe-4S] cluster</name>
        <dbReference type="ChEBI" id="CHEBI:49883"/>
        <label>2</label>
    </ligand>
</feature>
<feature type="binding site" evidence="1">
    <location>
        <position position="104"/>
    </location>
    <ligand>
        <name>[4Fe-4S] cluster</name>
        <dbReference type="ChEBI" id="CHEBI:49883"/>
        <label>2</label>
    </ligand>
</feature>
<feature type="binding site" evidence="1">
    <location>
        <position position="107"/>
    </location>
    <ligand>
        <name>[4Fe-4S] cluster</name>
        <dbReference type="ChEBI" id="CHEBI:49883"/>
        <label>2</label>
    </ligand>
</feature>
<feature type="binding site" evidence="1">
    <location>
        <position position="110"/>
    </location>
    <ligand>
        <name>[4Fe-4S] cluster</name>
        <dbReference type="ChEBI" id="CHEBI:49883"/>
        <label>2</label>
    </ligand>
</feature>
<feature type="binding site" evidence="1">
    <location>
        <position position="114"/>
    </location>
    <ligand>
        <name>[4Fe-4S] cluster</name>
        <dbReference type="ChEBI" id="CHEBI:49883"/>
        <label>1</label>
    </ligand>
</feature>
<comment type="function">
    <text evidence="1">NDH shuttles electrons from NAD(P)H:plastoquinone, via FMN and iron-sulfur (Fe-S) centers, to quinones in the photosynthetic chain and possibly in a chloroplast respiratory chain. The immediate electron acceptor for the enzyme in this species is believed to be plastoquinone. Couples the redox reaction to proton translocation, and thus conserves the redox energy in a proton gradient.</text>
</comment>
<comment type="catalytic activity">
    <reaction evidence="1">
        <text>a plastoquinone + NADH + (n+1) H(+)(in) = a plastoquinol + NAD(+) + n H(+)(out)</text>
        <dbReference type="Rhea" id="RHEA:42608"/>
        <dbReference type="Rhea" id="RHEA-COMP:9561"/>
        <dbReference type="Rhea" id="RHEA-COMP:9562"/>
        <dbReference type="ChEBI" id="CHEBI:15378"/>
        <dbReference type="ChEBI" id="CHEBI:17757"/>
        <dbReference type="ChEBI" id="CHEBI:57540"/>
        <dbReference type="ChEBI" id="CHEBI:57945"/>
        <dbReference type="ChEBI" id="CHEBI:62192"/>
    </reaction>
</comment>
<comment type="catalytic activity">
    <reaction evidence="1">
        <text>a plastoquinone + NADPH + (n+1) H(+)(in) = a plastoquinol + NADP(+) + n H(+)(out)</text>
        <dbReference type="Rhea" id="RHEA:42612"/>
        <dbReference type="Rhea" id="RHEA-COMP:9561"/>
        <dbReference type="Rhea" id="RHEA-COMP:9562"/>
        <dbReference type="ChEBI" id="CHEBI:15378"/>
        <dbReference type="ChEBI" id="CHEBI:17757"/>
        <dbReference type="ChEBI" id="CHEBI:57783"/>
        <dbReference type="ChEBI" id="CHEBI:58349"/>
        <dbReference type="ChEBI" id="CHEBI:62192"/>
    </reaction>
</comment>
<comment type="cofactor">
    <cofactor evidence="1">
        <name>[4Fe-4S] cluster</name>
        <dbReference type="ChEBI" id="CHEBI:49883"/>
    </cofactor>
    <text evidence="1">Binds 2 [4Fe-4S] clusters per subunit.</text>
</comment>
<comment type="subunit">
    <text evidence="1">NDH is composed of at least 16 different subunits, 5 of which are encoded in the nucleus.</text>
</comment>
<comment type="subcellular location">
    <subcellularLocation>
        <location evidence="1">Plastid</location>
        <location evidence="1">Chloroplast thylakoid membrane</location>
        <topology evidence="1">Peripheral membrane protein</topology>
    </subcellularLocation>
</comment>
<comment type="similarity">
    <text evidence="1">Belongs to the complex I 23 kDa subunit family.</text>
</comment>
<name>NDHI_ERIST</name>
<geneLocation type="chloroplast"/>